<evidence type="ECO:0000250" key="1">
    <source>
        <dbReference type="UniProtKB" id="D3HKY4"/>
    </source>
</evidence>
<evidence type="ECO:0000269" key="2">
    <source>
    </source>
</evidence>
<evidence type="ECO:0000269" key="3">
    <source>
    </source>
</evidence>
<evidence type="ECO:0000269" key="4">
    <source>
    </source>
</evidence>
<evidence type="ECO:0000269" key="5">
    <source ref="4"/>
</evidence>
<evidence type="ECO:0000303" key="6">
    <source>
    </source>
</evidence>
<evidence type="ECO:0000305" key="7"/>
<evidence type="ECO:0000305" key="8">
    <source>
    </source>
</evidence>
<gene>
    <name evidence="6" type="primary">eupH</name>
    <name type="ORF">gme12636</name>
</gene>
<accession>A0A4P8GF19</accession>
<name>EUPH_PHOSX</name>
<proteinExistence type="evidence at protein level"/>
<organism>
    <name type="scientific">Phoma sp</name>
    <dbReference type="NCBI Taxonomy" id="1707701"/>
    <lineage>
        <taxon>Eukaryota</taxon>
        <taxon>Fungi</taxon>
        <taxon>Dikarya</taxon>
        <taxon>Ascomycota</taxon>
        <taxon>Pezizomycotina</taxon>
        <taxon>Dothideomycetes</taxon>
        <taxon>Pleosporomycetidae</taxon>
        <taxon>Pleosporales</taxon>
        <taxon>Pleosporineae</taxon>
        <taxon>Didymellaceae</taxon>
        <taxon>Phoma</taxon>
    </lineage>
</organism>
<feature type="chain" id="PRO_0000449156" description="Flavin-dependent monooxygenase eupH">
    <location>
        <begin position="1"/>
        <end position="430"/>
    </location>
</feature>
<feature type="binding site" evidence="1">
    <location>
        <begin position="11"/>
        <end position="14"/>
    </location>
    <ligand>
        <name>FAD</name>
        <dbReference type="ChEBI" id="CHEBI:57692"/>
    </ligand>
</feature>
<feature type="binding site" evidence="1">
    <location>
        <begin position="33"/>
        <end position="34"/>
    </location>
    <ligand>
        <name>FAD</name>
        <dbReference type="ChEBI" id="CHEBI:57692"/>
    </ligand>
</feature>
<feature type="binding site" evidence="1">
    <location>
        <position position="43"/>
    </location>
    <ligand>
        <name>FAD</name>
        <dbReference type="ChEBI" id="CHEBI:57692"/>
    </ligand>
</feature>
<feature type="binding site" evidence="1">
    <location>
        <position position="107"/>
    </location>
    <ligand>
        <name>FAD</name>
        <dbReference type="ChEBI" id="CHEBI:57692"/>
    </ligand>
</feature>
<feature type="binding site" evidence="1">
    <location>
        <position position="282"/>
    </location>
    <ligand>
        <name>FAD</name>
        <dbReference type="ChEBI" id="CHEBI:57692"/>
    </ligand>
</feature>
<feature type="binding site" evidence="1">
    <location>
        <position position="306"/>
    </location>
    <ligand>
        <name>FAD</name>
        <dbReference type="ChEBI" id="CHEBI:57692"/>
    </ligand>
</feature>
<protein>
    <recommendedName>
        <fullName evidence="6">Flavin-dependent monooxygenase eupH</fullName>
        <ecNumber evidence="8">1.14.-.-</ecNumber>
    </recommendedName>
    <alternativeName>
        <fullName evidence="6">Eupenifeldin biosynthesis cluster protein H</fullName>
    </alternativeName>
</protein>
<sequence length="430" mass="47161">MTSLKVLIAGAGIGGPAAAFWLSRIGCEVTVVERSPRLRATGQQVDLSGQGIVVTRMMGIEDDLRAVRCPERGMRFVDHQGVTKAFFPVDYSGKAVYSPTQEVEVMRGDLVRILYDATKTLRGVKYVFDCHIKHFSQDDAPSGGKVHVALSDGTQDSYDILIGADGIASATREMMLGTSFPDLHRDLGVYMAYFTAPSQKDDTFDWSVCHISGGKAIMTRRDQPENIRVYLATRVGFDVLDAAKTLADQKAALISLFKGTQGWQVERFLNNLENSPEADDLYCQRMSQIRLPKGAWSKGRAVLLGDAAFCPGAIGGGVGTTAALIGAYVLAGEIEKEWEGCGRKTEEFNAQNATKEYERIVRPFITSRSDMSTWMVRLWLPESNFGVKTIQTIAGFAAGSQMSKYRGNSKPADETQKLEYPDYFGLGPKP</sequence>
<reference key="1">
    <citation type="journal article" date="2019" name="Fungal Genet. Biol.">
        <title>Identification of the gene cluster for bistropolone-humulene meroterpenoid biosynthesis in Phoma sp.</title>
        <authorList>
            <person name="Zhai Y."/>
            <person name="Li Y."/>
            <person name="Zhang J."/>
            <person name="Zhang Y."/>
            <person name="Ren F."/>
            <person name="Zhang X."/>
            <person name="Liu G."/>
            <person name="Liu X."/>
            <person name="Che Y."/>
        </authorList>
    </citation>
    <scope>NUCLEOTIDE SEQUENCE [GENOMIC DNA]</scope>
    <scope>FUNCTION</scope>
    <scope>DISRUPTION PHENOTYPE</scope>
    <scope>PATHWAY</scope>
    <source>
        <strain>XZ068 / CGMCC No. 10481</strain>
    </source>
</reference>
<reference key="2">
    <citation type="journal article" date="1993" name="J. Antibiot.">
        <title>Eupenifeldin, a novel cytotoxic bistropolone from Eupenicillium brefeldianum.</title>
        <authorList>
            <person name="Mayerl F."/>
            <person name="Gao Q."/>
            <person name="Huang S."/>
            <person name="Klohr S.E."/>
            <person name="Matson J.A."/>
            <person name="Gustavson D.R."/>
            <person name="Pirnik D.M."/>
            <person name="Berry R.L."/>
            <person name="Fairchild C."/>
            <person name="Rose W.C."/>
        </authorList>
    </citation>
    <scope>BIOTECHNOLOGY</scope>
</reference>
<reference key="3">
    <citation type="journal article" date="2008" name="J. Nat. Prod.">
        <title>Noreupenifeldin, a tropolone from an unidentified ascomycete.</title>
        <authorList>
            <person name="Ayers S."/>
            <person name="Zink D.L."/>
            <person name="Powell J.S."/>
            <person name="Brown C.M."/>
            <person name="Grund A."/>
            <person name="Bills G.F."/>
            <person name="Platas G."/>
            <person name="Thompson D."/>
            <person name="Singh S.B."/>
        </authorList>
    </citation>
    <scope>BIOTECHNOLOGY</scope>
</reference>
<reference key="4">
    <citation type="journal article" date="2008" name="Phytochem. Lett.">
        <title>Ramiferin, a bisphenol-sesquiterpene from the fungus Kionochaeta ramifera BCC 7585.</title>
        <authorList>
            <person name="Bunyapaiboonsri T."/>
            <person name="Veeranondha S."/>
            <person name="Boonruangprapa T."/>
            <person name="Somrithipol S."/>
        </authorList>
    </citation>
    <scope>BIOTECHNOLOGY</scope>
</reference>
<keyword id="KW-0274">FAD</keyword>
<keyword id="KW-0285">Flavoprotein</keyword>
<keyword id="KW-0521">NADP</keyword>
<keyword id="KW-0547">Nucleotide-binding</keyword>
<keyword id="KW-0560">Oxidoreductase</keyword>
<comment type="function">
    <text evidence="3 8">Flavin-dependent monooxygenase; part of the gene cluster that mediates the biosynthesis of eupenifeldin, a bistropolone meroterpenoid that acts as an antitumor agent (PubMed:30980906). The first step of eupenifeldin biosynthesis is the biosynthesis of 3-methylorcinaldehyde performed by the non-reducing polyketide synthase eupA (PubMed:30980906). Oxidative dearomatization of 3-methylorcinaldehyde likely catalyzed by the FAD-dependent monooxygenase eupB is followed by oxidative ring expansion by the 2-oxoglutarate-dependent dioxygenase eupC to provide the first tropolone metabolite, tropolone stipitaldehyde (Probable). In parallel, generation of sesquiterpene alpha-humulene from farnesylpyrophosphate (FPP) is catalyzed by the terpene cyclase eupE (PubMed:30980906). The cytochrome P450 monooxygenase eupD then hydroxylates humulene to humulenol (PubMed:30980906). The putative Diels-Alderase eupF probably catalyzes the formation of the tropolone-humulene skeleton by linking humulenol and the polyketide moiety (Probable). The short-chain dehydrogenase/reductase eupG and the flavin-dependent monooxygenase eupH are also essential for eupenifeldin biosynthesis and are likely the additional decorating enzymes of the tropolone-humulene skeleton to produce final eupenifeldin or derivatives (Probable).</text>
</comment>
<comment type="cofactor">
    <cofactor evidence="1">
        <name>FAD</name>
        <dbReference type="ChEBI" id="CHEBI:57692"/>
    </cofactor>
    <text evidence="1">Binds 1 FAD per subunit.</text>
</comment>
<comment type="pathway">
    <text evidence="3">Secondary metabolite biosynthesis; terpenoid biosynthesis.</text>
</comment>
<comment type="domain">
    <text evidence="1">Consists of an N-terminal FAD-binding domain with a Rossman fold, a substrate-binding domain and a C-terminal helix that bridges the 2 domains close to the antibiotic-binding site. This last helix is flexible and may contribute to their different substrate specificities.</text>
</comment>
<comment type="disruption phenotype">
    <text evidence="3">Abolishes the production of eupenifeldin.</text>
</comment>
<comment type="biotechnology">
    <text evidence="2 4 5">Eupenifeldin is a bistropolone-humulene meroterpenoid first discovered as an antitumor and anti-leukemia agent (PubMed:8360103). This metabolite also shows anthelmintic activity against the parasitic worm Hemonchus contortus, anti-malarial activity as well as antifungal activity (PubMed:18095654, Ref.4).</text>
</comment>
<comment type="similarity">
    <text evidence="7">Belongs to the aromatic-ring hydroxylase family.</text>
</comment>
<dbReference type="EC" id="1.14.-.-" evidence="8"/>
<dbReference type="EMBL" id="MK400120">
    <property type="protein sequence ID" value="QCO93114.1"/>
    <property type="molecule type" value="Genomic_DNA"/>
</dbReference>
<dbReference type="SMR" id="A0A4P8GF19"/>
<dbReference type="UniPathway" id="UPA00213"/>
<dbReference type="GO" id="GO:0071949">
    <property type="term" value="F:FAD binding"/>
    <property type="evidence" value="ECO:0007669"/>
    <property type="project" value="InterPro"/>
</dbReference>
<dbReference type="GO" id="GO:0016491">
    <property type="term" value="F:oxidoreductase activity"/>
    <property type="evidence" value="ECO:0007669"/>
    <property type="project" value="UniProtKB-KW"/>
</dbReference>
<dbReference type="GO" id="GO:0016114">
    <property type="term" value="P:terpenoid biosynthetic process"/>
    <property type="evidence" value="ECO:0007669"/>
    <property type="project" value="UniProtKB-UniPathway"/>
</dbReference>
<dbReference type="Gene3D" id="3.30.9.10">
    <property type="entry name" value="D-Amino Acid Oxidase, subunit A, domain 2"/>
    <property type="match status" value="1"/>
</dbReference>
<dbReference type="Gene3D" id="3.50.50.60">
    <property type="entry name" value="FAD/NAD(P)-binding domain"/>
    <property type="match status" value="1"/>
</dbReference>
<dbReference type="InterPro" id="IPR002938">
    <property type="entry name" value="FAD-bd"/>
</dbReference>
<dbReference type="InterPro" id="IPR036188">
    <property type="entry name" value="FAD/NAD-bd_sf"/>
</dbReference>
<dbReference type="InterPro" id="IPR051704">
    <property type="entry name" value="FAD_aromatic-hydroxylase"/>
</dbReference>
<dbReference type="PANTHER" id="PTHR46865:SF7">
    <property type="entry name" value="MONOOXYGENASE, PUTATIVE (AFU_ORTHOLOGUE AFUA_8G07040)-RELATED"/>
    <property type="match status" value="1"/>
</dbReference>
<dbReference type="PANTHER" id="PTHR46865">
    <property type="entry name" value="OXIDOREDUCTASE-RELATED"/>
    <property type="match status" value="1"/>
</dbReference>
<dbReference type="Pfam" id="PF01494">
    <property type="entry name" value="FAD_binding_3"/>
    <property type="match status" value="1"/>
</dbReference>
<dbReference type="PRINTS" id="PR00420">
    <property type="entry name" value="RNGMNOXGNASE"/>
</dbReference>
<dbReference type="SUPFAM" id="SSF51905">
    <property type="entry name" value="FAD/NAD(P)-binding domain"/>
    <property type="match status" value="1"/>
</dbReference>